<gene>
    <name evidence="1" type="primary">rplS</name>
    <name type="ordered locus">Maqu_2277</name>
</gene>
<protein>
    <recommendedName>
        <fullName evidence="1">Large ribosomal subunit protein bL19</fullName>
    </recommendedName>
    <alternativeName>
        <fullName evidence="2">50S ribosomal protein L19</fullName>
    </alternativeName>
</protein>
<reference key="1">
    <citation type="journal article" date="2011" name="Appl. Environ. Microbiol.">
        <title>Genomic potential of Marinobacter aquaeolei, a biogeochemical 'opportunitroph'.</title>
        <authorList>
            <person name="Singer E."/>
            <person name="Webb E.A."/>
            <person name="Nelson W.C."/>
            <person name="Heidelberg J.F."/>
            <person name="Ivanova N."/>
            <person name="Pati A."/>
            <person name="Edwards K.J."/>
        </authorList>
    </citation>
    <scope>NUCLEOTIDE SEQUENCE [LARGE SCALE GENOMIC DNA]</scope>
    <source>
        <strain>ATCC 700491 / DSM 11845 / VT8</strain>
    </source>
</reference>
<feature type="chain" id="PRO_1000049695" description="Large ribosomal subunit protein bL19">
    <location>
        <begin position="1"/>
        <end position="118"/>
    </location>
</feature>
<comment type="function">
    <text evidence="1">This protein is located at the 30S-50S ribosomal subunit interface and may play a role in the structure and function of the aminoacyl-tRNA binding site.</text>
</comment>
<comment type="similarity">
    <text evidence="1">Belongs to the bacterial ribosomal protein bL19 family.</text>
</comment>
<sequence length="118" mass="13281">MSGKNNIISQLEAEQMTKEIPAFAPGDTVVVQVRVTEGNRERLQAFEGVVIGKRNRGMNSSFTVRKISYGVGVERTFQTYSKLIDSVSVKRRGDVRQAKLYYLRDLSGKAARIKEKLN</sequence>
<name>RL19_MARN8</name>
<evidence type="ECO:0000255" key="1">
    <source>
        <dbReference type="HAMAP-Rule" id="MF_00402"/>
    </source>
</evidence>
<evidence type="ECO:0000305" key="2"/>
<dbReference type="EMBL" id="CP000514">
    <property type="protein sequence ID" value="ABM19355.1"/>
    <property type="molecule type" value="Genomic_DNA"/>
</dbReference>
<dbReference type="RefSeq" id="WP_011785742.1">
    <property type="nucleotide sequence ID" value="NC_008740.1"/>
</dbReference>
<dbReference type="SMR" id="A1U2Y6"/>
<dbReference type="STRING" id="351348.Maqu_2277"/>
<dbReference type="GeneID" id="31820437"/>
<dbReference type="KEGG" id="maq:Maqu_2277"/>
<dbReference type="eggNOG" id="COG0335">
    <property type="taxonomic scope" value="Bacteria"/>
</dbReference>
<dbReference type="HOGENOM" id="CLU_103507_2_2_6"/>
<dbReference type="OrthoDB" id="9803541at2"/>
<dbReference type="Proteomes" id="UP000000998">
    <property type="component" value="Chromosome"/>
</dbReference>
<dbReference type="GO" id="GO:0022625">
    <property type="term" value="C:cytosolic large ribosomal subunit"/>
    <property type="evidence" value="ECO:0007669"/>
    <property type="project" value="TreeGrafter"/>
</dbReference>
<dbReference type="GO" id="GO:0003735">
    <property type="term" value="F:structural constituent of ribosome"/>
    <property type="evidence" value="ECO:0007669"/>
    <property type="project" value="InterPro"/>
</dbReference>
<dbReference type="GO" id="GO:0006412">
    <property type="term" value="P:translation"/>
    <property type="evidence" value="ECO:0007669"/>
    <property type="project" value="UniProtKB-UniRule"/>
</dbReference>
<dbReference type="FunFam" id="2.30.30.790:FF:000001">
    <property type="entry name" value="50S ribosomal protein L19"/>
    <property type="match status" value="1"/>
</dbReference>
<dbReference type="Gene3D" id="2.30.30.790">
    <property type="match status" value="1"/>
</dbReference>
<dbReference type="HAMAP" id="MF_00402">
    <property type="entry name" value="Ribosomal_bL19"/>
    <property type="match status" value="1"/>
</dbReference>
<dbReference type="InterPro" id="IPR001857">
    <property type="entry name" value="Ribosomal_bL19"/>
</dbReference>
<dbReference type="InterPro" id="IPR018257">
    <property type="entry name" value="Ribosomal_bL19_CS"/>
</dbReference>
<dbReference type="InterPro" id="IPR038657">
    <property type="entry name" value="Ribosomal_bL19_sf"/>
</dbReference>
<dbReference type="InterPro" id="IPR008991">
    <property type="entry name" value="Translation_prot_SH3-like_sf"/>
</dbReference>
<dbReference type="NCBIfam" id="TIGR01024">
    <property type="entry name" value="rplS_bact"/>
    <property type="match status" value="1"/>
</dbReference>
<dbReference type="PANTHER" id="PTHR15680:SF9">
    <property type="entry name" value="LARGE RIBOSOMAL SUBUNIT PROTEIN BL19M"/>
    <property type="match status" value="1"/>
</dbReference>
<dbReference type="PANTHER" id="PTHR15680">
    <property type="entry name" value="RIBOSOMAL PROTEIN L19"/>
    <property type="match status" value="1"/>
</dbReference>
<dbReference type="Pfam" id="PF01245">
    <property type="entry name" value="Ribosomal_L19"/>
    <property type="match status" value="1"/>
</dbReference>
<dbReference type="PIRSF" id="PIRSF002191">
    <property type="entry name" value="Ribosomal_L19"/>
    <property type="match status" value="1"/>
</dbReference>
<dbReference type="PRINTS" id="PR00061">
    <property type="entry name" value="RIBOSOMALL19"/>
</dbReference>
<dbReference type="SUPFAM" id="SSF50104">
    <property type="entry name" value="Translation proteins SH3-like domain"/>
    <property type="match status" value="1"/>
</dbReference>
<dbReference type="PROSITE" id="PS01015">
    <property type="entry name" value="RIBOSOMAL_L19"/>
    <property type="match status" value="1"/>
</dbReference>
<accession>A1U2Y6</accession>
<proteinExistence type="inferred from homology"/>
<keyword id="KW-0687">Ribonucleoprotein</keyword>
<keyword id="KW-0689">Ribosomal protein</keyword>
<organism>
    <name type="scientific">Marinobacter nauticus (strain ATCC 700491 / DSM 11845 / VT8)</name>
    <name type="common">Marinobacter aquaeolei</name>
    <dbReference type="NCBI Taxonomy" id="351348"/>
    <lineage>
        <taxon>Bacteria</taxon>
        <taxon>Pseudomonadati</taxon>
        <taxon>Pseudomonadota</taxon>
        <taxon>Gammaproteobacteria</taxon>
        <taxon>Pseudomonadales</taxon>
        <taxon>Marinobacteraceae</taxon>
        <taxon>Marinobacter</taxon>
    </lineage>
</organism>